<comment type="function">
    <text evidence="3">Component of TORC2, which regulates cell cycle-dependent polarization of the actin-cytoskeleton and cell wall integrity. TORC2 controls polarity of the actin cytoskeleton, which is required for orienting the secretory pathway toward discrete growth sites, via the RHO1/PKC1/MAPK cell integrity pathway.</text>
</comment>
<comment type="subunit">
    <text evidence="3 4">The target of rapamycin complex 2 (TORC2) is composed of at least AVO1, AVO2, BIT61, LST8, TOR2 and TSC11 (PubMed:14736892, PubMed:29170376). TORC2 forms a homodimer (PubMed:14736892, PubMed:29170376). Contrary to TORC1, TORC2 does not bind to and is not sensitive to FKBP-rapamycin (PubMed:14736892, PubMed:29170376).</text>
</comment>
<comment type="interaction">
    <interactant intactId="EBI-25889">
        <id>P47041</id>
    </interactant>
    <interactant intactId="EBI-19385">
        <id>P32600</id>
        <label>TOR2</label>
    </interactant>
    <organismsDiffer>false</organismsDiffer>
    <experiments>3</experiments>
</comment>
<comment type="subcellular location">
    <subcellularLocation>
        <location>Cell membrane</location>
        <topology>Peripheral membrane protein</topology>
        <orientation>Cytoplasmic side</orientation>
    </subcellularLocation>
    <subcellularLocation>
        <location evidence="5">Vacuole membrane</location>
        <topology evidence="5">Peripheral membrane protein</topology>
        <orientation evidence="5">Cytoplasmic side</orientation>
    </subcellularLocation>
</comment>
<comment type="miscellaneous">
    <text evidence="2">Present with 1960 molecules/cell in log phase SD medium.</text>
</comment>
<comment type="similarity">
    <text evidence="5">Belongs to the BIT61 family.</text>
</comment>
<protein>
    <recommendedName>
        <fullName>Target of rapamycin complex 2 subunit BIT61</fullName>
        <shortName>TORC2 subunit BIT61</shortName>
    </recommendedName>
    <alternativeName>
        <fullName>61 kDa binding partner of TOR2 protein</fullName>
    </alternativeName>
</protein>
<accession>P47041</accession>
<accession>D6VWC4</accession>
<gene>
    <name type="primary">BIT61</name>
    <name type="ordered locus">YJL058C</name>
    <name type="ORF">J1141</name>
</gene>
<organism>
    <name type="scientific">Saccharomyces cerevisiae (strain ATCC 204508 / S288c)</name>
    <name type="common">Baker's yeast</name>
    <dbReference type="NCBI Taxonomy" id="559292"/>
    <lineage>
        <taxon>Eukaryota</taxon>
        <taxon>Fungi</taxon>
        <taxon>Dikarya</taxon>
        <taxon>Ascomycota</taxon>
        <taxon>Saccharomycotina</taxon>
        <taxon>Saccharomycetes</taxon>
        <taxon>Saccharomycetales</taxon>
        <taxon>Saccharomycetaceae</taxon>
        <taxon>Saccharomyces</taxon>
    </lineage>
</organism>
<dbReference type="EMBL" id="Z49333">
    <property type="protein sequence ID" value="CAA89349.1"/>
    <property type="molecule type" value="Genomic_DNA"/>
</dbReference>
<dbReference type="EMBL" id="AY693068">
    <property type="protein sequence ID" value="AAT93087.1"/>
    <property type="molecule type" value="Genomic_DNA"/>
</dbReference>
<dbReference type="EMBL" id="BK006943">
    <property type="protein sequence ID" value="DAA08740.1"/>
    <property type="molecule type" value="Genomic_DNA"/>
</dbReference>
<dbReference type="PIR" id="S56830">
    <property type="entry name" value="S56830"/>
</dbReference>
<dbReference type="RefSeq" id="NP_012477.1">
    <property type="nucleotide sequence ID" value="NM_001181491.1"/>
</dbReference>
<dbReference type="BioGRID" id="33696">
    <property type="interactions" value="101"/>
</dbReference>
<dbReference type="ComplexPortal" id="CPX-1717">
    <property type="entry name" value="TORC2 complex"/>
</dbReference>
<dbReference type="DIP" id="DIP-1444N"/>
<dbReference type="FunCoup" id="P47041">
    <property type="interactions" value="49"/>
</dbReference>
<dbReference type="IntAct" id="P47041">
    <property type="interactions" value="18"/>
</dbReference>
<dbReference type="MINT" id="P47041"/>
<dbReference type="STRING" id="4932.YJL058C"/>
<dbReference type="iPTMnet" id="P47041"/>
<dbReference type="PaxDb" id="4932-YJL058C"/>
<dbReference type="PeptideAtlas" id="P47041"/>
<dbReference type="EnsemblFungi" id="YJL058C_mRNA">
    <property type="protein sequence ID" value="YJL058C"/>
    <property type="gene ID" value="YJL058C"/>
</dbReference>
<dbReference type="GeneID" id="853388"/>
<dbReference type="KEGG" id="sce:YJL058C"/>
<dbReference type="AGR" id="SGD:S000003594"/>
<dbReference type="SGD" id="S000003594">
    <property type="gene designation" value="BIT61"/>
</dbReference>
<dbReference type="VEuPathDB" id="FungiDB:YJL058C"/>
<dbReference type="eggNOG" id="ENOG502RZ40">
    <property type="taxonomic scope" value="Eukaryota"/>
</dbReference>
<dbReference type="GeneTree" id="ENSGT00940000176511"/>
<dbReference type="HOGENOM" id="CLU_037144_0_0_1"/>
<dbReference type="InParanoid" id="P47041"/>
<dbReference type="OMA" id="NDQMREN"/>
<dbReference type="OrthoDB" id="2290221at2759"/>
<dbReference type="BioCyc" id="YEAST:G3O-31521-MONOMER"/>
<dbReference type="Reactome" id="R-SCE-1257604">
    <property type="pathway name" value="PIP3 activates AKT signaling"/>
</dbReference>
<dbReference type="Reactome" id="R-SCE-389357">
    <property type="pathway name" value="CD28 dependent PI3K/Akt signaling"/>
</dbReference>
<dbReference type="Reactome" id="R-SCE-5218920">
    <property type="pathway name" value="VEGFR2 mediated vascular permeability"/>
</dbReference>
<dbReference type="Reactome" id="R-SCE-6804757">
    <property type="pathway name" value="Regulation of TP53 Degradation"/>
</dbReference>
<dbReference type="Reactome" id="R-SCE-9856530">
    <property type="pathway name" value="High laminar flow shear stress activates signaling by PIEZO1 and PECAM1:CDH5:KDR in endothelial cells"/>
</dbReference>
<dbReference type="BioGRID-ORCS" id="853388">
    <property type="hits" value="0 hits in 10 CRISPR screens"/>
</dbReference>
<dbReference type="PRO" id="PR:P47041"/>
<dbReference type="Proteomes" id="UP000002311">
    <property type="component" value="Chromosome X"/>
</dbReference>
<dbReference type="RNAct" id="P47041">
    <property type="molecule type" value="protein"/>
</dbReference>
<dbReference type="GO" id="GO:0071944">
    <property type="term" value="C:cell periphery"/>
    <property type="evidence" value="ECO:0007005"/>
    <property type="project" value="SGD"/>
</dbReference>
<dbReference type="GO" id="GO:0005737">
    <property type="term" value="C:cytoplasm"/>
    <property type="evidence" value="ECO:0007005"/>
    <property type="project" value="SGD"/>
</dbReference>
<dbReference type="GO" id="GO:0005886">
    <property type="term" value="C:plasma membrane"/>
    <property type="evidence" value="ECO:0000314"/>
    <property type="project" value="SGD"/>
</dbReference>
<dbReference type="GO" id="GO:0031932">
    <property type="term" value="C:TORC2 complex"/>
    <property type="evidence" value="ECO:0000314"/>
    <property type="project" value="UniProtKB"/>
</dbReference>
<dbReference type="GO" id="GO:0005774">
    <property type="term" value="C:vacuolar membrane"/>
    <property type="evidence" value="ECO:0007669"/>
    <property type="project" value="UniProtKB-SubCell"/>
</dbReference>
<dbReference type="GO" id="GO:0030950">
    <property type="term" value="P:establishment or maintenance of actin cytoskeleton polarity"/>
    <property type="evidence" value="ECO:0000353"/>
    <property type="project" value="SGD"/>
</dbReference>
<dbReference type="GO" id="GO:0031505">
    <property type="term" value="P:fungal-type cell wall organization"/>
    <property type="evidence" value="ECO:0000353"/>
    <property type="project" value="SGD"/>
</dbReference>
<dbReference type="GO" id="GO:0001558">
    <property type="term" value="P:regulation of cell growth"/>
    <property type="evidence" value="ECO:0000353"/>
    <property type="project" value="SGD"/>
</dbReference>
<dbReference type="GO" id="GO:0031929">
    <property type="term" value="P:TOR signaling"/>
    <property type="evidence" value="ECO:0000303"/>
    <property type="project" value="ComplexPortal"/>
</dbReference>
<dbReference type="GO" id="GO:0038203">
    <property type="term" value="P:TORC2 signaling"/>
    <property type="evidence" value="ECO:0000318"/>
    <property type="project" value="GO_Central"/>
</dbReference>
<dbReference type="InterPro" id="IPR013745">
    <property type="entry name" value="Bit61/PRR5"/>
</dbReference>
<dbReference type="PANTHER" id="PTHR32428">
    <property type="entry name" value="TARGET OF RAPAMYCIN COMPLEX 2 SUBUNIT BIT61-RELATED"/>
    <property type="match status" value="1"/>
</dbReference>
<dbReference type="PANTHER" id="PTHR32428:SF2">
    <property type="entry name" value="TARGET OF RAPAMYCIN COMPLEX 2 SUBUNIT BIT61-RELATED"/>
    <property type="match status" value="1"/>
</dbReference>
<dbReference type="Pfam" id="PF08539">
    <property type="entry name" value="HbrB"/>
    <property type="match status" value="1"/>
</dbReference>
<reference key="1">
    <citation type="journal article" date="1996" name="EMBO J.">
        <title>Complete nucleotide sequence of Saccharomyces cerevisiae chromosome X.</title>
        <authorList>
            <person name="Galibert F."/>
            <person name="Alexandraki D."/>
            <person name="Baur A."/>
            <person name="Boles E."/>
            <person name="Chalwatzis N."/>
            <person name="Chuat J.-C."/>
            <person name="Coster F."/>
            <person name="Cziepluch C."/>
            <person name="de Haan M."/>
            <person name="Domdey H."/>
            <person name="Durand P."/>
            <person name="Entian K.-D."/>
            <person name="Gatius M."/>
            <person name="Goffeau A."/>
            <person name="Grivell L.A."/>
            <person name="Hennemann A."/>
            <person name="Herbert C.J."/>
            <person name="Heumann K."/>
            <person name="Hilger F."/>
            <person name="Hollenberg C.P."/>
            <person name="Huang M.-E."/>
            <person name="Jacq C."/>
            <person name="Jauniaux J.-C."/>
            <person name="Katsoulou C."/>
            <person name="Kirchrath L."/>
            <person name="Kleine K."/>
            <person name="Kordes E."/>
            <person name="Koetter P."/>
            <person name="Liebl S."/>
            <person name="Louis E.J."/>
            <person name="Manus V."/>
            <person name="Mewes H.-W."/>
            <person name="Miosga T."/>
            <person name="Obermaier B."/>
            <person name="Perea J."/>
            <person name="Pohl T.M."/>
            <person name="Portetelle D."/>
            <person name="Pujol A."/>
            <person name="Purnelle B."/>
            <person name="Ramezani Rad M."/>
            <person name="Rasmussen S.W."/>
            <person name="Rose M."/>
            <person name="Rossau R."/>
            <person name="Schaaff-Gerstenschlaeger I."/>
            <person name="Smits P.H.M."/>
            <person name="Scarcez T."/>
            <person name="Soriano N."/>
            <person name="To Van D."/>
            <person name="Tzermia M."/>
            <person name="Van Broekhoven A."/>
            <person name="Vandenbol M."/>
            <person name="Wedler H."/>
            <person name="von Wettstein D."/>
            <person name="Wambutt R."/>
            <person name="Zagulski M."/>
            <person name="Zollner A."/>
            <person name="Karpfinger-Hartl L."/>
        </authorList>
    </citation>
    <scope>NUCLEOTIDE SEQUENCE [LARGE SCALE GENOMIC DNA]</scope>
    <source>
        <strain>ATCC 204508 / S288c</strain>
    </source>
</reference>
<reference key="2">
    <citation type="journal article" date="2014" name="G3 (Bethesda)">
        <title>The reference genome sequence of Saccharomyces cerevisiae: Then and now.</title>
        <authorList>
            <person name="Engel S.R."/>
            <person name="Dietrich F.S."/>
            <person name="Fisk D.G."/>
            <person name="Binkley G."/>
            <person name="Balakrishnan R."/>
            <person name="Costanzo M.C."/>
            <person name="Dwight S.S."/>
            <person name="Hitz B.C."/>
            <person name="Karra K."/>
            <person name="Nash R.S."/>
            <person name="Weng S."/>
            <person name="Wong E.D."/>
            <person name="Lloyd P."/>
            <person name="Skrzypek M.S."/>
            <person name="Miyasato S.R."/>
            <person name="Simison M."/>
            <person name="Cherry J.M."/>
        </authorList>
    </citation>
    <scope>GENOME REANNOTATION</scope>
    <source>
        <strain>ATCC 204508 / S288c</strain>
    </source>
</reference>
<reference key="3">
    <citation type="journal article" date="2007" name="Genome Res.">
        <title>Approaching a complete repository of sequence-verified protein-encoding clones for Saccharomyces cerevisiae.</title>
        <authorList>
            <person name="Hu Y."/>
            <person name="Rolfs A."/>
            <person name="Bhullar B."/>
            <person name="Murthy T.V.S."/>
            <person name="Zhu C."/>
            <person name="Berger M.F."/>
            <person name="Camargo A.A."/>
            <person name="Kelley F."/>
            <person name="McCarron S."/>
            <person name="Jepson D."/>
            <person name="Richardson A."/>
            <person name="Raphael J."/>
            <person name="Moreira D."/>
            <person name="Taycher E."/>
            <person name="Zuo D."/>
            <person name="Mohr S."/>
            <person name="Kane M.F."/>
            <person name="Williamson J."/>
            <person name="Simpson A.J.G."/>
            <person name="Bulyk M.L."/>
            <person name="Harlow E."/>
            <person name="Marsischky G."/>
            <person name="Kolodner R.D."/>
            <person name="LaBaer J."/>
        </authorList>
    </citation>
    <scope>NUCLEOTIDE SEQUENCE [GENOMIC DNA]</scope>
    <source>
        <strain>ATCC 204508 / S288c</strain>
    </source>
</reference>
<reference key="4">
    <citation type="journal article" date="2003" name="Nature">
        <title>Global analysis of protein expression in yeast.</title>
        <authorList>
            <person name="Ghaemmaghami S."/>
            <person name="Huh W.-K."/>
            <person name="Bower K."/>
            <person name="Howson R.W."/>
            <person name="Belle A."/>
            <person name="Dephoure N."/>
            <person name="O'Shea E.K."/>
            <person name="Weissman J.S."/>
        </authorList>
    </citation>
    <scope>LEVEL OF PROTEIN EXPRESSION [LARGE SCALE ANALYSIS]</scope>
</reference>
<reference key="5">
    <citation type="journal article" date="2004" name="J. Biol. Chem.">
        <title>TOR complex 1 includes a novel component, Tco89p (YPL180w), and cooperates with Ssd1p to maintain cellular integrity in Saccharomyces cerevisiae.</title>
        <authorList>
            <person name="Reinke A."/>
            <person name="Anderson S."/>
            <person name="McCaffery J.M."/>
            <person name="Yates J.R. III"/>
            <person name="Aronova S."/>
            <person name="Chu S."/>
            <person name="Fairclough S."/>
            <person name="Iverson C."/>
            <person name="Wedaman K.P."/>
            <person name="Powers T."/>
        </authorList>
    </citation>
    <scope>FUNCTION</scope>
    <scope>IDENTIFICATION IN TORC2</scope>
    <scope>IDENTIFICATION BY MASS SPECTROMETRY</scope>
</reference>
<reference key="6">
    <citation type="journal article" date="2005" name="Mol. Biol. Cell">
        <title>The pleckstrin homology domain proteins Slm1 and Slm2 are required for actin cytoskeleton organization in yeast and bind phosphatidylinositol-4,5-bisphosphate and TORC2.</title>
        <authorList>
            <person name="Fadri M."/>
            <person name="Daquinag A."/>
            <person name="Wang S."/>
            <person name="Xue T."/>
            <person name="Kunz J."/>
        </authorList>
    </citation>
    <scope>INTERACTION WITH SLM1 AND SLM2</scope>
</reference>
<reference key="7">
    <citation type="journal article" date="2007" name="J. Proteome Res.">
        <title>Large-scale phosphorylation analysis of alpha-factor-arrested Saccharomyces cerevisiae.</title>
        <authorList>
            <person name="Li X."/>
            <person name="Gerber S.A."/>
            <person name="Rudner A.D."/>
            <person name="Beausoleil S.A."/>
            <person name="Haas W."/>
            <person name="Villen J."/>
            <person name="Elias J.E."/>
            <person name="Gygi S.P."/>
        </authorList>
    </citation>
    <scope>PHOSPHORYLATION [LARGE SCALE ANALYSIS] AT SER-144</scope>
    <scope>IDENTIFICATION BY MASS SPECTROMETRY [LARGE SCALE ANALYSIS]</scope>
    <source>
        <strain>ADR376</strain>
    </source>
</reference>
<reference key="8">
    <citation type="journal article" date="2008" name="Mol. Cell. Proteomics">
        <title>A multidimensional chromatography technology for in-depth phosphoproteome analysis.</title>
        <authorList>
            <person name="Albuquerque C.P."/>
            <person name="Smolka M.B."/>
            <person name="Payne S.H."/>
            <person name="Bafna V."/>
            <person name="Eng J."/>
            <person name="Zhou H."/>
        </authorList>
    </citation>
    <scope>IDENTIFICATION BY MASS SPECTROMETRY [LARGE SCALE ANALYSIS]</scope>
</reference>
<reference key="9">
    <citation type="journal article" date="2009" name="Science">
        <title>Global analysis of Cdk1 substrate phosphorylation sites provides insights into evolution.</title>
        <authorList>
            <person name="Holt L.J."/>
            <person name="Tuch B.B."/>
            <person name="Villen J."/>
            <person name="Johnson A.D."/>
            <person name="Gygi S.P."/>
            <person name="Morgan D.O."/>
        </authorList>
    </citation>
    <scope>PHOSPHORYLATION [LARGE SCALE ANALYSIS] AT TYR-58; SER-59; SER-139 AND SER-144</scope>
    <scope>IDENTIFICATION BY MASS SPECTROMETRY [LARGE SCALE ANALYSIS]</scope>
</reference>
<reference key="10">
    <citation type="journal article" date="2017" name="Nat. Commun.">
        <title>Cryo-EM structure of Saccharomyces cerevisiae target of rapamycin complex 2.</title>
        <authorList>
            <person name="Karuppasamy M."/>
            <person name="Kusmider B."/>
            <person name="Oliveira T.M."/>
            <person name="Gaubitz C."/>
            <person name="Prouteau M."/>
            <person name="Loewith R."/>
            <person name="Schaffitzel C."/>
        </authorList>
    </citation>
    <scope>STRUCTURE BY ELECTRON MICROSCOPY (7.90 ANGSTROMS) OF THE TORC2 COMPLEX</scope>
    <scope>IDENTIFICATION IN THE TORC2 COMPLEX</scope>
</reference>
<evidence type="ECO:0000256" key="1">
    <source>
        <dbReference type="SAM" id="MobiDB-lite"/>
    </source>
</evidence>
<evidence type="ECO:0000269" key="2">
    <source>
    </source>
</evidence>
<evidence type="ECO:0000269" key="3">
    <source>
    </source>
</evidence>
<evidence type="ECO:0000269" key="4">
    <source>
    </source>
</evidence>
<evidence type="ECO:0000305" key="5"/>
<evidence type="ECO:0007744" key="6">
    <source>
    </source>
</evidence>
<evidence type="ECO:0007744" key="7">
    <source>
    </source>
</evidence>
<proteinExistence type="evidence at protein level"/>
<keyword id="KW-1003">Cell membrane</keyword>
<keyword id="KW-0472">Membrane</keyword>
<keyword id="KW-0597">Phosphoprotein</keyword>
<keyword id="KW-1185">Reference proteome</keyword>
<keyword id="KW-0926">Vacuole</keyword>
<name>BIT61_YEAST</name>
<sequence>MTAEDILLRERTSTTTQRPVNSEQYLNVQLATAPVKNFQTTSEISRQTLVDTSNDDVYSIKNLKGSRNPISPSVSNVGFQSIFHTVDHPRSKVSVASNHSLRSNDNASAATSKSGSSQIGESHSVDTVECSNNLSKKLSSDAISITQKSLHSTPSGRYMKGKASGFFNRRNRAHTTISSDPASFLTDSSTLHNSSHSFRNVIKNFFQNKSHRHIGQDAIEPAIPNSLSKFLHSSYGRHKSPSQFIHTNAGQLVDSGTSVYSLNVNPSGVNPNTIVEDPLSGTDPASPNPVSMLHDLLRNLPSLEANYKHFNSQELTTLTNNIWNIFCSNVAELFRTQRIWKLRAKIENFNEVLEFYCILKTDPRVTHSGMNRIISDLKEFLVSSLYNLENQIVFNYSNEDTINNALKRLGVIWRIFYQEVYYDLAAVLLPLDQSIREDGNSTVLKSGNESRTHINGNYSIGFLLLMCFRDSIVLPCYENFVNSNDGISKSFQLYIFNQEEESNVTETDKLTLLQCFGILSTIQSNDRNQRIIEELLAGIRMSI</sequence>
<feature type="chain" id="PRO_0000203060" description="Target of rapamycin complex 2 subunit BIT61">
    <location>
        <begin position="1"/>
        <end position="543"/>
    </location>
</feature>
<feature type="region of interest" description="Disordered" evidence="1">
    <location>
        <begin position="93"/>
        <end position="126"/>
    </location>
</feature>
<feature type="compositionally biased region" description="Polar residues" evidence="1">
    <location>
        <begin position="94"/>
        <end position="121"/>
    </location>
</feature>
<feature type="modified residue" description="Phosphotyrosine" evidence="7">
    <location>
        <position position="58"/>
    </location>
</feature>
<feature type="modified residue" description="Phosphoserine" evidence="7">
    <location>
        <position position="59"/>
    </location>
</feature>
<feature type="modified residue" description="Phosphoserine" evidence="7">
    <location>
        <position position="139"/>
    </location>
</feature>
<feature type="modified residue" description="Phosphoserine" evidence="6 7">
    <location>
        <position position="144"/>
    </location>
</feature>